<gene>
    <name type="primary">metJ</name>
    <name type="ordered locus">b3938</name>
    <name type="ordered locus">JW3909</name>
</gene>
<evidence type="ECO:0000269" key="1">
    <source>
    </source>
</evidence>
<evidence type="ECO:0000269" key="2">
    <source>
    </source>
</evidence>
<evidence type="ECO:0000305" key="3"/>
<evidence type="ECO:0007829" key="4">
    <source>
        <dbReference type="PDB" id="1CMB"/>
    </source>
</evidence>
<evidence type="ECO:0007829" key="5">
    <source>
        <dbReference type="PDB" id="1CMC"/>
    </source>
</evidence>
<evidence type="ECO:0007829" key="6">
    <source>
        <dbReference type="PDB" id="1MJL"/>
    </source>
</evidence>
<evidence type="ECO:0007829" key="7">
    <source>
        <dbReference type="PDB" id="1MJO"/>
    </source>
</evidence>
<dbReference type="EMBL" id="M12869">
    <property type="protein sequence ID" value="AAA24163.1"/>
    <property type="molecule type" value="Genomic_DNA"/>
</dbReference>
<dbReference type="EMBL" id="L19201">
    <property type="protein sequence ID" value="AAB03070.1"/>
    <property type="molecule type" value="Genomic_DNA"/>
</dbReference>
<dbReference type="EMBL" id="U00096">
    <property type="protein sequence ID" value="AAC76920.1"/>
    <property type="molecule type" value="Genomic_DNA"/>
</dbReference>
<dbReference type="EMBL" id="AP009048">
    <property type="protein sequence ID" value="BAE77372.1"/>
    <property type="molecule type" value="Genomic_DNA"/>
</dbReference>
<dbReference type="EMBL" id="M38202">
    <property type="protein sequence ID" value="AAA24162.1"/>
    <property type="molecule type" value="Genomic_DNA"/>
</dbReference>
<dbReference type="PIR" id="A22660">
    <property type="entry name" value="RGECMJ"/>
</dbReference>
<dbReference type="RefSeq" id="NP_418373.1">
    <property type="nucleotide sequence ID" value="NC_000913.3"/>
</dbReference>
<dbReference type="RefSeq" id="WP_000852812.1">
    <property type="nucleotide sequence ID" value="NZ_STEB01000037.1"/>
</dbReference>
<dbReference type="PDB" id="1CMA">
    <property type="method" value="X-ray"/>
    <property type="resolution" value="2.80 A"/>
    <property type="chains" value="A/B=2-105"/>
</dbReference>
<dbReference type="PDB" id="1CMB">
    <property type="method" value="X-ray"/>
    <property type="resolution" value="1.80 A"/>
    <property type="chains" value="A/B=2-105"/>
</dbReference>
<dbReference type="PDB" id="1CMC">
    <property type="method" value="X-ray"/>
    <property type="resolution" value="1.80 A"/>
    <property type="chains" value="A/B=2-105"/>
</dbReference>
<dbReference type="PDB" id="1MJ2">
    <property type="method" value="X-ray"/>
    <property type="resolution" value="2.40 A"/>
    <property type="chains" value="A/B/C/D=2-105"/>
</dbReference>
<dbReference type="PDB" id="1MJK">
    <property type="method" value="X-ray"/>
    <property type="resolution" value="2.15 A"/>
    <property type="chains" value="A/B=2-105"/>
</dbReference>
<dbReference type="PDB" id="1MJL">
    <property type="method" value="X-ray"/>
    <property type="resolution" value="2.10 A"/>
    <property type="chains" value="A/B=2-105"/>
</dbReference>
<dbReference type="PDB" id="1MJM">
    <property type="method" value="X-ray"/>
    <property type="resolution" value="2.20 A"/>
    <property type="chains" value="A/B=2-105"/>
</dbReference>
<dbReference type="PDB" id="1MJO">
    <property type="method" value="X-ray"/>
    <property type="resolution" value="2.10 A"/>
    <property type="chains" value="A/B/C/D=2-105"/>
</dbReference>
<dbReference type="PDB" id="1MJP">
    <property type="method" value="X-ray"/>
    <property type="resolution" value="3.40 A"/>
    <property type="chains" value="A/B=2-105"/>
</dbReference>
<dbReference type="PDB" id="1MJQ">
    <property type="method" value="X-ray"/>
    <property type="resolution" value="2.40 A"/>
    <property type="chains" value="A/B/C/D/G/H/I/J=2-105"/>
</dbReference>
<dbReference type="PDBsum" id="1CMA"/>
<dbReference type="PDBsum" id="1CMB"/>
<dbReference type="PDBsum" id="1CMC"/>
<dbReference type="PDBsum" id="1MJ2"/>
<dbReference type="PDBsum" id="1MJK"/>
<dbReference type="PDBsum" id="1MJL"/>
<dbReference type="PDBsum" id="1MJM"/>
<dbReference type="PDBsum" id="1MJO"/>
<dbReference type="PDBsum" id="1MJP"/>
<dbReference type="PDBsum" id="1MJQ"/>
<dbReference type="SMR" id="P0A8U6"/>
<dbReference type="BioGRID" id="4263206">
    <property type="interactions" value="137"/>
</dbReference>
<dbReference type="DIP" id="DIP-47929N"/>
<dbReference type="FunCoup" id="P0A8U6">
    <property type="interactions" value="96"/>
</dbReference>
<dbReference type="IntAct" id="P0A8U6">
    <property type="interactions" value="1"/>
</dbReference>
<dbReference type="STRING" id="511145.b3938"/>
<dbReference type="jPOST" id="P0A8U6"/>
<dbReference type="PaxDb" id="511145-b3938"/>
<dbReference type="EnsemblBacteria" id="AAC76920">
    <property type="protein sequence ID" value="AAC76920"/>
    <property type="gene ID" value="b3938"/>
</dbReference>
<dbReference type="GeneID" id="93777954"/>
<dbReference type="GeneID" id="948435"/>
<dbReference type="KEGG" id="ecj:JW3909"/>
<dbReference type="KEGG" id="eco:b3938"/>
<dbReference type="KEGG" id="ecoc:C3026_21280"/>
<dbReference type="PATRIC" id="fig|1411691.4.peg.2767"/>
<dbReference type="EchoBASE" id="EB0583"/>
<dbReference type="eggNOG" id="COG3060">
    <property type="taxonomic scope" value="Bacteria"/>
</dbReference>
<dbReference type="HOGENOM" id="CLU_142318_0_0_6"/>
<dbReference type="InParanoid" id="P0A8U6"/>
<dbReference type="OMA" id="KWNGEYI"/>
<dbReference type="OrthoDB" id="5680896at2"/>
<dbReference type="PhylomeDB" id="P0A8U6"/>
<dbReference type="BioCyc" id="EcoCyc:PD04032"/>
<dbReference type="EvolutionaryTrace" id="P0A8U6"/>
<dbReference type="PRO" id="PR:P0A8U6"/>
<dbReference type="Proteomes" id="UP000000625">
    <property type="component" value="Chromosome"/>
</dbReference>
<dbReference type="GO" id="GO:0005829">
    <property type="term" value="C:cytosol"/>
    <property type="evidence" value="ECO:0000314"/>
    <property type="project" value="EcoCyc"/>
</dbReference>
<dbReference type="GO" id="GO:0003677">
    <property type="term" value="F:DNA binding"/>
    <property type="evidence" value="ECO:0007669"/>
    <property type="project" value="UniProtKB-KW"/>
</dbReference>
<dbReference type="GO" id="GO:0003700">
    <property type="term" value="F:DNA-binding transcription factor activity"/>
    <property type="evidence" value="ECO:0007669"/>
    <property type="project" value="InterPro"/>
</dbReference>
<dbReference type="GO" id="GO:0009086">
    <property type="term" value="P:methionine biosynthetic process"/>
    <property type="evidence" value="ECO:0007669"/>
    <property type="project" value="UniProtKB-UniRule"/>
</dbReference>
<dbReference type="GO" id="GO:0045892">
    <property type="term" value="P:negative regulation of DNA-templated transcription"/>
    <property type="evidence" value="ECO:0007669"/>
    <property type="project" value="UniProtKB-UniRule"/>
</dbReference>
<dbReference type="CDD" id="cd00490">
    <property type="entry name" value="Met_repressor_MetJ"/>
    <property type="match status" value="1"/>
</dbReference>
<dbReference type="FunFam" id="1.10.140.10:FF:000001">
    <property type="entry name" value="Met repressor"/>
    <property type="match status" value="1"/>
</dbReference>
<dbReference type="Gene3D" id="1.10.140.10">
    <property type="entry name" value="MET Apo-Repressor, subunit A"/>
    <property type="match status" value="1"/>
</dbReference>
<dbReference type="HAMAP" id="MF_00744">
    <property type="entry name" value="MetJ"/>
    <property type="match status" value="1"/>
</dbReference>
<dbReference type="InterPro" id="IPR002084">
    <property type="entry name" value="Met_repressor_MetJ"/>
</dbReference>
<dbReference type="InterPro" id="IPR023453">
    <property type="entry name" value="Met_repressor_MetJ_dom_sf"/>
</dbReference>
<dbReference type="InterPro" id="IPR010985">
    <property type="entry name" value="Ribbon_hlx_hlx"/>
</dbReference>
<dbReference type="NCBIfam" id="NF003622">
    <property type="entry name" value="PRK05264.1"/>
    <property type="match status" value="1"/>
</dbReference>
<dbReference type="Pfam" id="PF01340">
    <property type="entry name" value="MetJ"/>
    <property type="match status" value="1"/>
</dbReference>
<dbReference type="SUPFAM" id="SSF47598">
    <property type="entry name" value="Ribbon-helix-helix"/>
    <property type="match status" value="1"/>
</dbReference>
<keyword id="KW-0002">3D-structure</keyword>
<keyword id="KW-0028">Amino-acid biosynthesis</keyword>
<keyword id="KW-0963">Cytoplasm</keyword>
<keyword id="KW-0903">Direct protein sequencing</keyword>
<keyword id="KW-0238">DNA-binding</keyword>
<keyword id="KW-0486">Methionine biosynthesis</keyword>
<keyword id="KW-1185">Reference proteome</keyword>
<keyword id="KW-0678">Repressor</keyword>
<keyword id="KW-0804">Transcription</keyword>
<keyword id="KW-0805">Transcription regulation</keyword>
<name>METJ_ECOLI</name>
<comment type="function">
    <text>This regulatory protein, when combined with SAM (S-adenosylmethionine) represses the expression of the methionine regulon and of enzymes involved in SAM synthesis. It is also autoregulated.</text>
</comment>
<comment type="subunit">
    <text>Homodimer.</text>
</comment>
<comment type="interaction">
    <interactant intactId="EBI-555272">
        <id>P0A8U6</id>
    </interactant>
    <interactant intactId="EBI-551571">
        <id>P0AFF6</id>
        <label>nusA</label>
    </interactant>
    <organismsDiffer>false</organismsDiffer>
    <experiments>3</experiments>
</comment>
<comment type="subcellular location">
    <subcellularLocation>
        <location>Cytoplasm</location>
    </subcellularLocation>
</comment>
<comment type="domain">
    <text>Does not bind DNA by a helix-turn-helix motif.</text>
</comment>
<comment type="similarity">
    <text evidence="3">Belongs to the MetJ family.</text>
</comment>
<reference key="1">
    <citation type="journal article" date="1984" name="J. Biol. Chem.">
        <title>Structure and autoregulation of the metJ regulatory gene in Escherichia coli.</title>
        <authorList>
            <person name="Saint-Girons I."/>
            <person name="Duchange N."/>
            <person name="Cohen G.C."/>
            <person name="Zakin M.M."/>
        </authorList>
    </citation>
    <scope>NUCLEOTIDE SEQUENCE [GENOMIC DNA]</scope>
    <scope>PROTEIN SEQUENCE OF 2-6</scope>
</reference>
<reference key="2">
    <citation type="journal article" date="1993" name="Nucleic Acids Res.">
        <title>Analysis of the Escherichia coli genome. III. DNA sequence of the region from 87.2 to 89.2 minutes.</title>
        <authorList>
            <person name="Plunkett G. III"/>
            <person name="Burland V."/>
            <person name="Daniels D.L."/>
            <person name="Blattner F.R."/>
        </authorList>
    </citation>
    <scope>NUCLEOTIDE SEQUENCE [LARGE SCALE GENOMIC DNA]</scope>
    <source>
        <strain>K12 / MG1655 / ATCC 47076</strain>
    </source>
</reference>
<reference key="3">
    <citation type="journal article" date="1997" name="Science">
        <title>The complete genome sequence of Escherichia coli K-12.</title>
        <authorList>
            <person name="Blattner F.R."/>
            <person name="Plunkett G. III"/>
            <person name="Bloch C.A."/>
            <person name="Perna N.T."/>
            <person name="Burland V."/>
            <person name="Riley M."/>
            <person name="Collado-Vides J."/>
            <person name="Glasner J.D."/>
            <person name="Rode C.K."/>
            <person name="Mayhew G.F."/>
            <person name="Gregor J."/>
            <person name="Davis N.W."/>
            <person name="Kirkpatrick H.A."/>
            <person name="Goeden M.A."/>
            <person name="Rose D.J."/>
            <person name="Mau B."/>
            <person name="Shao Y."/>
        </authorList>
    </citation>
    <scope>NUCLEOTIDE SEQUENCE [LARGE SCALE GENOMIC DNA]</scope>
    <source>
        <strain>K12 / MG1655 / ATCC 47076</strain>
    </source>
</reference>
<reference key="4">
    <citation type="journal article" date="2006" name="Mol. Syst. Biol.">
        <title>Highly accurate genome sequences of Escherichia coli K-12 strains MG1655 and W3110.</title>
        <authorList>
            <person name="Hayashi K."/>
            <person name="Morooka N."/>
            <person name="Yamamoto Y."/>
            <person name="Fujita K."/>
            <person name="Isono K."/>
            <person name="Choi S."/>
            <person name="Ohtsubo E."/>
            <person name="Baba T."/>
            <person name="Wanner B.L."/>
            <person name="Mori H."/>
            <person name="Horiuchi T."/>
        </authorList>
    </citation>
    <scope>NUCLEOTIDE SEQUENCE [LARGE SCALE GENOMIC DNA]</scope>
    <source>
        <strain>K12 / W3110 / ATCC 27325 / DSM 5911</strain>
    </source>
</reference>
<reference key="5">
    <citation type="journal article" date="1990" name="J. Bacteriol.">
        <title>The Escherichia coli K-12 metJ193 allele contains a point mutation which alters the hydrophobic pocket responsible for in vitro binding of S-adenosylmethionine: effects on cell growth and induction of met regulon expression.</title>
        <authorList>
            <person name="Collier C.D."/>
            <person name="Johnson J.R."/>
        </authorList>
    </citation>
    <scope>VARIANT METJ193 GLN-57</scope>
</reference>
<reference key="6">
    <citation type="journal article" date="1989" name="Nature">
        <title>Three-dimensional crystal structures of Escherichia coli met repressor with and without corepressor.</title>
        <authorList>
            <person name="Rafferty J.B."/>
            <person name="Somers W.S."/>
            <person name="Saint-Girons I."/>
            <person name="Phillips S.E.V."/>
        </authorList>
    </citation>
    <scope>X-RAY CRYSTALLOGRAPHY (1.9 ANGSTROMS)</scope>
</reference>
<reference key="7">
    <citation type="journal article" date="1992" name="Nature">
        <title>Crystal structure of the met repressor-operator complex at 2.8-A resolution reveals DNA recognition by beta-strands.</title>
        <authorList>
            <person name="Somers W.S."/>
            <person name="Phillips S.E.V."/>
        </authorList>
    </citation>
    <scope>X-RAY CRYSTALLOGRAPHY (2.8 ANGSTROMS)</scope>
</reference>
<reference key="8">
    <citation type="submission" date="1998-01" db="PDB data bank">
        <authorList>
            <person name="Garvie C.W."/>
            <person name="Phillips S.E.V."/>
        </authorList>
    </citation>
    <scope>X-RAY CRYSTALLOGRAPHY (2.15 ANGSTROMS)</scope>
</reference>
<feature type="initiator methionine" description="Removed" evidence="2">
    <location>
        <position position="1"/>
    </location>
</feature>
<feature type="chain" id="PRO_0000198397" description="Met repressor">
    <location>
        <begin position="2"/>
        <end position="105"/>
    </location>
</feature>
<feature type="sequence variant" description="In metJ193." evidence="1">
    <original>L</original>
    <variation>Q</variation>
    <location>
        <position position="57"/>
    </location>
</feature>
<feature type="sequence variant" description="Hinders dimerization.">
    <original>A</original>
    <variation>T</variation>
    <location>
        <position position="61"/>
    </location>
</feature>
<feature type="strand" evidence="4">
    <location>
        <begin position="11"/>
        <end position="15"/>
    </location>
</feature>
<feature type="helix" evidence="7">
    <location>
        <begin position="18"/>
        <end position="21"/>
    </location>
</feature>
<feature type="strand" evidence="4">
    <location>
        <begin position="22"/>
        <end position="30"/>
    </location>
</feature>
<feature type="helix" evidence="4">
    <location>
        <begin position="31"/>
        <end position="47"/>
    </location>
</feature>
<feature type="helix" evidence="4">
    <location>
        <begin position="54"/>
        <end position="67"/>
    </location>
</feature>
<feature type="helix" evidence="4">
    <location>
        <begin position="74"/>
        <end position="77"/>
    </location>
</feature>
<feature type="strand" evidence="6">
    <location>
        <begin position="79"/>
        <end position="81"/>
    </location>
</feature>
<feature type="helix" evidence="4">
    <location>
        <begin position="87"/>
        <end position="95"/>
    </location>
</feature>
<feature type="turn" evidence="5">
    <location>
        <begin position="100"/>
        <end position="102"/>
    </location>
</feature>
<organism>
    <name type="scientific">Escherichia coli (strain K12)</name>
    <dbReference type="NCBI Taxonomy" id="83333"/>
    <lineage>
        <taxon>Bacteria</taxon>
        <taxon>Pseudomonadati</taxon>
        <taxon>Pseudomonadota</taxon>
        <taxon>Gammaproteobacteria</taxon>
        <taxon>Enterobacterales</taxon>
        <taxon>Enterobacteriaceae</taxon>
        <taxon>Escherichia</taxon>
    </lineage>
</organism>
<sequence length="105" mass="12141">MAEWSGEYISPYAEHGKKSEQVKKITVSIPLKVLKILTDERTRRQVNNLRHATNSELLCEAFLHAFTGQPLPDDADLRKERSDEIPEAAKEIMREMGINPETWEY</sequence>
<protein>
    <recommendedName>
        <fullName>Met repressor</fullName>
    </recommendedName>
    <alternativeName>
        <fullName>Met regulon regulatory protein MetJ</fullName>
    </alternativeName>
</protein>
<proteinExistence type="evidence at protein level"/>
<accession>P0A8U6</accession>
<accession>P08338</accession>
<accession>Q2M8N4</accession>